<keyword id="KW-0066">ATP synthesis</keyword>
<keyword id="KW-1003">Cell membrane</keyword>
<keyword id="KW-0375">Hydrogen ion transport</keyword>
<keyword id="KW-0406">Ion transport</keyword>
<keyword id="KW-0472">Membrane</keyword>
<keyword id="KW-0813">Transport</keyword>
<protein>
    <recommendedName>
        <fullName evidence="1">A-type ATP synthase subunit E</fullName>
    </recommendedName>
</protein>
<gene>
    <name evidence="1" type="primary">atpE</name>
    <name type="ordered locus">YN1551_1265</name>
</gene>
<feature type="chain" id="PRO_1000205055" description="A-type ATP synthase subunit E">
    <location>
        <begin position="1"/>
        <end position="194"/>
    </location>
</feature>
<name>AATE_SACI1</name>
<dbReference type="EMBL" id="CP001404">
    <property type="protein sequence ID" value="ACP48360.1"/>
    <property type="molecule type" value="Genomic_DNA"/>
</dbReference>
<dbReference type="RefSeq" id="WP_012717391.1">
    <property type="nucleotide sequence ID" value="NC_012623.1"/>
</dbReference>
<dbReference type="SMR" id="C3NGV0"/>
<dbReference type="GeneID" id="7810924"/>
<dbReference type="KEGG" id="sin:YN1551_1265"/>
<dbReference type="HOGENOM" id="CLU_1412391_0_0_2"/>
<dbReference type="Proteomes" id="UP000006818">
    <property type="component" value="Chromosome"/>
</dbReference>
<dbReference type="GO" id="GO:0005886">
    <property type="term" value="C:plasma membrane"/>
    <property type="evidence" value="ECO:0007669"/>
    <property type="project" value="UniProtKB-SubCell"/>
</dbReference>
<dbReference type="GO" id="GO:0033178">
    <property type="term" value="C:proton-transporting two-sector ATPase complex, catalytic domain"/>
    <property type="evidence" value="ECO:0007669"/>
    <property type="project" value="InterPro"/>
</dbReference>
<dbReference type="GO" id="GO:0005524">
    <property type="term" value="F:ATP binding"/>
    <property type="evidence" value="ECO:0007669"/>
    <property type="project" value="UniProtKB-UniRule"/>
</dbReference>
<dbReference type="GO" id="GO:0046933">
    <property type="term" value="F:proton-transporting ATP synthase activity, rotational mechanism"/>
    <property type="evidence" value="ECO:0007669"/>
    <property type="project" value="UniProtKB-UniRule"/>
</dbReference>
<dbReference type="GO" id="GO:0046961">
    <property type="term" value="F:proton-transporting ATPase activity, rotational mechanism"/>
    <property type="evidence" value="ECO:0007669"/>
    <property type="project" value="InterPro"/>
</dbReference>
<dbReference type="GO" id="GO:0042777">
    <property type="term" value="P:proton motive force-driven plasma membrane ATP synthesis"/>
    <property type="evidence" value="ECO:0007669"/>
    <property type="project" value="UniProtKB-UniRule"/>
</dbReference>
<dbReference type="Gene3D" id="3.30.2320.30">
    <property type="entry name" value="ATP synthase, E subunit, C-terminal"/>
    <property type="match status" value="1"/>
</dbReference>
<dbReference type="HAMAP" id="MF_00311">
    <property type="entry name" value="ATP_synth_E_arch"/>
    <property type="match status" value="1"/>
</dbReference>
<dbReference type="InterPro" id="IPR038495">
    <property type="entry name" value="ATPase_E_C"/>
</dbReference>
<dbReference type="InterPro" id="IPR002842">
    <property type="entry name" value="ATPase_V1_Esu"/>
</dbReference>
<dbReference type="Pfam" id="PF01991">
    <property type="entry name" value="vATP-synt_E"/>
    <property type="match status" value="1"/>
</dbReference>
<dbReference type="SUPFAM" id="SSF160527">
    <property type="entry name" value="V-type ATPase subunit E-like"/>
    <property type="match status" value="1"/>
</dbReference>
<proteinExistence type="inferred from homology"/>
<comment type="function">
    <text evidence="1">Component of the A-type ATP synthase that produces ATP from ADP in the presence of a proton gradient across the membrane.</text>
</comment>
<comment type="subunit">
    <text evidence="1">Has multiple subunits with at least A(3), B(3), C, D, E, F, H, I and proteolipid K(x).</text>
</comment>
<comment type="subcellular location">
    <subcellularLocation>
        <location evidence="1">Cell membrane</location>
        <topology evidence="1">Peripheral membrane protein</topology>
    </subcellularLocation>
</comment>
<comment type="similarity">
    <text evidence="1">Belongs to the V-ATPase E subunit family.</text>
</comment>
<reference key="1">
    <citation type="journal article" date="2009" name="Proc. Natl. Acad. Sci. U.S.A.">
        <title>Biogeography of the Sulfolobus islandicus pan-genome.</title>
        <authorList>
            <person name="Reno M.L."/>
            <person name="Held N.L."/>
            <person name="Fields C.J."/>
            <person name="Burke P.V."/>
            <person name="Whitaker R.J."/>
        </authorList>
    </citation>
    <scope>NUCLEOTIDE SEQUENCE [LARGE SCALE GENOMIC DNA]</scope>
    <source>
        <strain>Y.N.15.51 / Yellowstone #2</strain>
    </source>
</reference>
<organism>
    <name type="scientific">Saccharolobus islandicus (strain Y.N.15.51 / Yellowstone #2)</name>
    <name type="common">Sulfolobus islandicus</name>
    <dbReference type="NCBI Taxonomy" id="419942"/>
    <lineage>
        <taxon>Archaea</taxon>
        <taxon>Thermoproteota</taxon>
        <taxon>Thermoprotei</taxon>
        <taxon>Sulfolobales</taxon>
        <taxon>Sulfolobaceae</taxon>
        <taxon>Saccharolobus</taxon>
    </lineage>
</organism>
<sequence>MDFEQLLDKSLNKVREEIKTELSKSLDEAIKLLNEGHTKIIQEYTQRINELITKTKEEIEGEKARLEVENKRTLLVEKEYWINKVYERVLEKIGEVVKTKEYKDAIQSILNKEIKEIEGEKITVYCSPNDKSTVEKVVGNNKNVTIKTDDKMLGGIRIYYEGSGLTRDFSLKLILDQVFDSMRGKISDMLFGGK</sequence>
<evidence type="ECO:0000255" key="1">
    <source>
        <dbReference type="HAMAP-Rule" id="MF_00311"/>
    </source>
</evidence>
<accession>C3NGV0</accession>